<reference key="1">
    <citation type="journal article" date="2010" name="Genome Biol. Evol.">
        <title>Continuing evolution of Burkholderia mallei through genome reduction and large-scale rearrangements.</title>
        <authorList>
            <person name="Losada L."/>
            <person name="Ronning C.M."/>
            <person name="DeShazer D."/>
            <person name="Woods D."/>
            <person name="Fedorova N."/>
            <person name="Kim H.S."/>
            <person name="Shabalina S.A."/>
            <person name="Pearson T.R."/>
            <person name="Brinkac L."/>
            <person name="Tan P."/>
            <person name="Nandi T."/>
            <person name="Crabtree J."/>
            <person name="Badger J."/>
            <person name="Beckstrom-Sternberg S."/>
            <person name="Saqib M."/>
            <person name="Schutzer S.E."/>
            <person name="Keim P."/>
            <person name="Nierman W.C."/>
        </authorList>
    </citation>
    <scope>NUCLEOTIDE SEQUENCE [LARGE SCALE GENOMIC DNA]</scope>
    <source>
        <strain>668</strain>
    </source>
</reference>
<accession>A3NCY6</accession>
<comment type="function">
    <text evidence="1">Negatively regulates transcription of bacterial ribonucleotide reductase nrd genes and operons by binding to NrdR-boxes.</text>
</comment>
<comment type="cofactor">
    <cofactor evidence="1">
        <name>Zn(2+)</name>
        <dbReference type="ChEBI" id="CHEBI:29105"/>
    </cofactor>
    <text evidence="1">Binds 1 zinc ion.</text>
</comment>
<comment type="similarity">
    <text evidence="1">Belongs to the NrdR family.</text>
</comment>
<protein>
    <recommendedName>
        <fullName evidence="1">Transcriptional repressor NrdR</fullName>
    </recommendedName>
</protein>
<evidence type="ECO:0000255" key="1">
    <source>
        <dbReference type="HAMAP-Rule" id="MF_00440"/>
    </source>
</evidence>
<dbReference type="EMBL" id="CP000570">
    <property type="protein sequence ID" value="ABN83332.1"/>
    <property type="molecule type" value="Genomic_DNA"/>
</dbReference>
<dbReference type="RefSeq" id="WP_004185666.1">
    <property type="nucleotide sequence ID" value="NC_009074.1"/>
</dbReference>
<dbReference type="SMR" id="A3NCY6"/>
<dbReference type="GeneID" id="93061344"/>
<dbReference type="KEGG" id="bpd:BURPS668_3195"/>
<dbReference type="HOGENOM" id="CLU_108412_0_0_4"/>
<dbReference type="GO" id="GO:0005524">
    <property type="term" value="F:ATP binding"/>
    <property type="evidence" value="ECO:0007669"/>
    <property type="project" value="UniProtKB-KW"/>
</dbReference>
<dbReference type="GO" id="GO:0003677">
    <property type="term" value="F:DNA binding"/>
    <property type="evidence" value="ECO:0007669"/>
    <property type="project" value="UniProtKB-KW"/>
</dbReference>
<dbReference type="GO" id="GO:0008270">
    <property type="term" value="F:zinc ion binding"/>
    <property type="evidence" value="ECO:0007669"/>
    <property type="project" value="UniProtKB-UniRule"/>
</dbReference>
<dbReference type="GO" id="GO:0045892">
    <property type="term" value="P:negative regulation of DNA-templated transcription"/>
    <property type="evidence" value="ECO:0007669"/>
    <property type="project" value="UniProtKB-UniRule"/>
</dbReference>
<dbReference type="HAMAP" id="MF_00440">
    <property type="entry name" value="NrdR"/>
    <property type="match status" value="1"/>
</dbReference>
<dbReference type="InterPro" id="IPR005144">
    <property type="entry name" value="ATP-cone_dom"/>
</dbReference>
<dbReference type="InterPro" id="IPR055173">
    <property type="entry name" value="NrdR-like_N"/>
</dbReference>
<dbReference type="InterPro" id="IPR003796">
    <property type="entry name" value="RNR_NrdR-like"/>
</dbReference>
<dbReference type="NCBIfam" id="TIGR00244">
    <property type="entry name" value="transcriptional regulator NrdR"/>
    <property type="match status" value="1"/>
</dbReference>
<dbReference type="PANTHER" id="PTHR30455">
    <property type="entry name" value="TRANSCRIPTIONAL REPRESSOR NRDR"/>
    <property type="match status" value="1"/>
</dbReference>
<dbReference type="PANTHER" id="PTHR30455:SF2">
    <property type="entry name" value="TRANSCRIPTIONAL REPRESSOR NRDR"/>
    <property type="match status" value="1"/>
</dbReference>
<dbReference type="Pfam" id="PF03477">
    <property type="entry name" value="ATP-cone"/>
    <property type="match status" value="1"/>
</dbReference>
<dbReference type="Pfam" id="PF22811">
    <property type="entry name" value="Zn_ribbon_NrdR"/>
    <property type="match status" value="1"/>
</dbReference>
<dbReference type="PROSITE" id="PS51161">
    <property type="entry name" value="ATP_CONE"/>
    <property type="match status" value="1"/>
</dbReference>
<name>NRDR_BURP6</name>
<proteinExistence type="inferred from homology"/>
<keyword id="KW-0067">ATP-binding</keyword>
<keyword id="KW-0238">DNA-binding</keyword>
<keyword id="KW-0479">Metal-binding</keyword>
<keyword id="KW-0547">Nucleotide-binding</keyword>
<keyword id="KW-0678">Repressor</keyword>
<keyword id="KW-0804">Transcription</keyword>
<keyword id="KW-0805">Transcription regulation</keyword>
<keyword id="KW-0862">Zinc</keyword>
<keyword id="KW-0863">Zinc-finger</keyword>
<feature type="chain" id="PRO_1000080726" description="Transcriptional repressor NrdR">
    <location>
        <begin position="1"/>
        <end position="159"/>
    </location>
</feature>
<feature type="domain" description="ATP-cone" evidence="1">
    <location>
        <begin position="49"/>
        <end position="139"/>
    </location>
</feature>
<feature type="zinc finger region" evidence="1">
    <location>
        <begin position="3"/>
        <end position="34"/>
    </location>
</feature>
<organism>
    <name type="scientific">Burkholderia pseudomallei (strain 668)</name>
    <dbReference type="NCBI Taxonomy" id="320373"/>
    <lineage>
        <taxon>Bacteria</taxon>
        <taxon>Pseudomonadati</taxon>
        <taxon>Pseudomonadota</taxon>
        <taxon>Betaproteobacteria</taxon>
        <taxon>Burkholderiales</taxon>
        <taxon>Burkholderiaceae</taxon>
        <taxon>Burkholderia</taxon>
        <taxon>pseudomallei group</taxon>
    </lineage>
</organism>
<gene>
    <name evidence="1" type="primary">nrdR</name>
    <name type="ordered locus">BURPS668_3195</name>
</gene>
<sequence>MRCPFCRHDDTQVVDSRVSEDGAAIRRRRRCSACDKRFTTYERVELALPAVVKKDGSRTEFDRRKIVASMQLALRKRPVAADAIDAAVARIEYQLLASGEREVRSEKLGELVMNELRQLDTIAYVRFASVYRRFEDVSEFEDVIEEFRRAAPAKTPRKR</sequence>